<feature type="chain" id="PRO_1000114710" description="Potassium-transporting ATPase potassium-binding subunit">
    <location>
        <begin position="1"/>
        <end position="562"/>
    </location>
</feature>
<feature type="transmembrane region" description="Helical" evidence="1">
    <location>
        <begin position="6"/>
        <end position="26"/>
    </location>
</feature>
<feature type="transmembrane region" description="Helical" evidence="1">
    <location>
        <begin position="62"/>
        <end position="82"/>
    </location>
</feature>
<feature type="transmembrane region" description="Helical" evidence="1">
    <location>
        <begin position="132"/>
        <end position="152"/>
    </location>
</feature>
<feature type="transmembrane region" description="Helical" evidence="1">
    <location>
        <begin position="175"/>
        <end position="195"/>
    </location>
</feature>
<feature type="transmembrane region" description="Helical" evidence="1">
    <location>
        <begin position="253"/>
        <end position="273"/>
    </location>
</feature>
<feature type="transmembrane region" description="Helical" evidence="1">
    <location>
        <begin position="283"/>
        <end position="303"/>
    </location>
</feature>
<feature type="transmembrane region" description="Helical" evidence="1">
    <location>
        <begin position="327"/>
        <end position="347"/>
    </location>
</feature>
<feature type="transmembrane region" description="Helical" evidence="1">
    <location>
        <begin position="356"/>
        <end position="376"/>
    </location>
</feature>
<feature type="transmembrane region" description="Helical" evidence="1">
    <location>
        <begin position="379"/>
        <end position="399"/>
    </location>
</feature>
<feature type="transmembrane region" description="Helical" evidence="1">
    <location>
        <begin position="416"/>
        <end position="436"/>
    </location>
</feature>
<feature type="transmembrane region" description="Helical" evidence="1">
    <location>
        <begin position="483"/>
        <end position="503"/>
    </location>
</feature>
<feature type="transmembrane region" description="Helical" evidence="1">
    <location>
        <begin position="526"/>
        <end position="546"/>
    </location>
</feature>
<accession>B1JR97</accession>
<protein>
    <recommendedName>
        <fullName evidence="1">Potassium-transporting ATPase potassium-binding subunit</fullName>
    </recommendedName>
    <alternativeName>
        <fullName evidence="1">ATP phosphohydrolase [potassium-transporting] A chain</fullName>
    </alternativeName>
    <alternativeName>
        <fullName evidence="1">Potassium-binding and translocating subunit A</fullName>
    </alternativeName>
    <alternativeName>
        <fullName evidence="1">Potassium-translocating ATPase A chain</fullName>
    </alternativeName>
</protein>
<comment type="function">
    <text evidence="1">Part of the high-affinity ATP-driven potassium transport (or Kdp) system, which catalyzes the hydrolysis of ATP coupled with the electrogenic transport of potassium into the cytoplasm. This subunit binds the periplasmic potassium ions and delivers the ions to the membrane domain of KdpB through an intramembrane tunnel.</text>
</comment>
<comment type="subunit">
    <text evidence="1">The system is composed of three essential subunits: KdpA, KdpB and KdpC.</text>
</comment>
<comment type="subcellular location">
    <subcellularLocation>
        <location evidence="1">Cell inner membrane</location>
        <topology evidence="1">Multi-pass membrane protein</topology>
    </subcellularLocation>
</comment>
<comment type="similarity">
    <text evidence="1">Belongs to the KdpA family.</text>
</comment>
<organism>
    <name type="scientific">Yersinia pseudotuberculosis serotype O:3 (strain YPIII)</name>
    <dbReference type="NCBI Taxonomy" id="502800"/>
    <lineage>
        <taxon>Bacteria</taxon>
        <taxon>Pseudomonadati</taxon>
        <taxon>Pseudomonadota</taxon>
        <taxon>Gammaproteobacteria</taxon>
        <taxon>Enterobacterales</taxon>
        <taxon>Yersiniaceae</taxon>
        <taxon>Yersinia</taxon>
    </lineage>
</organism>
<dbReference type="EMBL" id="CP000950">
    <property type="protein sequence ID" value="ACA67457.1"/>
    <property type="molecule type" value="Genomic_DNA"/>
</dbReference>
<dbReference type="RefSeq" id="WP_011192832.1">
    <property type="nucleotide sequence ID" value="NZ_CP009792.1"/>
</dbReference>
<dbReference type="SMR" id="B1JR97"/>
<dbReference type="GeneID" id="49785072"/>
<dbReference type="KEGG" id="ypy:YPK_1159"/>
<dbReference type="PATRIC" id="fig|502800.11.peg.1795"/>
<dbReference type="GO" id="GO:0005886">
    <property type="term" value="C:plasma membrane"/>
    <property type="evidence" value="ECO:0007669"/>
    <property type="project" value="UniProtKB-SubCell"/>
</dbReference>
<dbReference type="GO" id="GO:0008556">
    <property type="term" value="F:P-type potassium transmembrane transporter activity"/>
    <property type="evidence" value="ECO:0007669"/>
    <property type="project" value="InterPro"/>
</dbReference>
<dbReference type="GO" id="GO:0030955">
    <property type="term" value="F:potassium ion binding"/>
    <property type="evidence" value="ECO:0007669"/>
    <property type="project" value="UniProtKB-UniRule"/>
</dbReference>
<dbReference type="HAMAP" id="MF_00275">
    <property type="entry name" value="KdpA"/>
    <property type="match status" value="1"/>
</dbReference>
<dbReference type="InterPro" id="IPR004623">
    <property type="entry name" value="KdpA"/>
</dbReference>
<dbReference type="NCBIfam" id="TIGR00680">
    <property type="entry name" value="kdpA"/>
    <property type="match status" value="1"/>
</dbReference>
<dbReference type="PANTHER" id="PTHR30607">
    <property type="entry name" value="POTASSIUM-TRANSPORTING ATPASE A CHAIN"/>
    <property type="match status" value="1"/>
</dbReference>
<dbReference type="PANTHER" id="PTHR30607:SF2">
    <property type="entry name" value="POTASSIUM-TRANSPORTING ATPASE POTASSIUM-BINDING SUBUNIT"/>
    <property type="match status" value="1"/>
</dbReference>
<dbReference type="Pfam" id="PF03814">
    <property type="entry name" value="KdpA"/>
    <property type="match status" value="1"/>
</dbReference>
<dbReference type="PIRSF" id="PIRSF001294">
    <property type="entry name" value="K_ATPaseA"/>
    <property type="match status" value="1"/>
</dbReference>
<keyword id="KW-0997">Cell inner membrane</keyword>
<keyword id="KW-1003">Cell membrane</keyword>
<keyword id="KW-0406">Ion transport</keyword>
<keyword id="KW-0472">Membrane</keyword>
<keyword id="KW-0630">Potassium</keyword>
<keyword id="KW-0633">Potassium transport</keyword>
<keyword id="KW-0812">Transmembrane</keyword>
<keyword id="KW-1133">Transmembrane helix</keyword>
<keyword id="KW-0813">Transport</keyword>
<gene>
    <name evidence="1" type="primary">kdpA</name>
    <name type="ordered locus">YPK_1159</name>
</gene>
<evidence type="ECO:0000255" key="1">
    <source>
        <dbReference type="HAMAP-Rule" id="MF_00275"/>
    </source>
</evidence>
<name>KDPA_YERPY</name>
<reference key="1">
    <citation type="submission" date="2008-02" db="EMBL/GenBank/DDBJ databases">
        <title>Complete sequence of Yersinia pseudotuberculosis YPIII.</title>
        <authorList>
            <consortium name="US DOE Joint Genome Institute"/>
            <person name="Copeland A."/>
            <person name="Lucas S."/>
            <person name="Lapidus A."/>
            <person name="Glavina del Rio T."/>
            <person name="Dalin E."/>
            <person name="Tice H."/>
            <person name="Bruce D."/>
            <person name="Goodwin L."/>
            <person name="Pitluck S."/>
            <person name="Munk A.C."/>
            <person name="Brettin T."/>
            <person name="Detter J.C."/>
            <person name="Han C."/>
            <person name="Tapia R."/>
            <person name="Schmutz J."/>
            <person name="Larimer F."/>
            <person name="Land M."/>
            <person name="Hauser L."/>
            <person name="Challacombe J.F."/>
            <person name="Green L."/>
            <person name="Lindler L.E."/>
            <person name="Nikolich M.P."/>
            <person name="Richardson P."/>
        </authorList>
    </citation>
    <scope>NUCLEOTIDE SEQUENCE [LARGE SCALE GENOMIC DNA]</scope>
    <source>
        <strain>YPIII</strain>
    </source>
</reference>
<proteinExistence type="inferred from homology"/>
<sequence length="562" mass="59175">MVASGFLLIASFMLVLFVLSRPLGGFLARLIEGEPFSALQKVEAGLWRCSGVKNAEMNGWQYALAILCFNLLGIVLLFVLLMTQGSLPLNPEHLPGMSWHLALNTAVSFVTNTNWQAYSGENTLSYLSQMAGLTVQNFLSAATGIAVAFALIRAFARHSATTLGNAWVDLVRITLYVLLPIALIIALIFVSQGVLQNLDGYLHITTLEGVQQTLPMGPVASQEAIKVLGTNGGGFFGANSAHPFENPTAFSNFVQMLAIFLIPCALCFAFGQVVGDNRQGHALIWAMSLIFIVAVVVVMYAELAGNPHLSPLGADSNSNMEGKESRFGILATSLYAVVTTAASCGAVNAMHDSFTALGGMIPLWLMQIGEVVFGGVGSGLYGMLLFVLLTVFIAGLMIGRTPEYLGKKIDVFDMKMTALAILVTPTIVLLGTALALCTEAGRAGILNPGAHGFSEVLYALSSAANNNGSAFAGLSVNTPFYNLLLAAAMFIGRFGVILPVLAIASSLVAKKRQPAGNGTLPTGGPLFIGLLIGTVLLVGALTFIPALALGPVAEHLQVWLAH</sequence>